<feature type="chain" id="PRO_1000026017" description="Thiazole synthase">
    <location>
        <begin position="1"/>
        <end position="262"/>
    </location>
</feature>
<feature type="region of interest" description="Disordered" evidence="2">
    <location>
        <begin position="243"/>
        <end position="262"/>
    </location>
</feature>
<feature type="active site" description="Schiff-base intermediate with DXP" evidence="1">
    <location>
        <position position="97"/>
    </location>
</feature>
<feature type="binding site" evidence="1">
    <location>
        <position position="158"/>
    </location>
    <ligand>
        <name>1-deoxy-D-xylulose 5-phosphate</name>
        <dbReference type="ChEBI" id="CHEBI:57792"/>
    </ligand>
</feature>
<feature type="binding site" evidence="1">
    <location>
        <begin position="185"/>
        <end position="186"/>
    </location>
    <ligand>
        <name>1-deoxy-D-xylulose 5-phosphate</name>
        <dbReference type="ChEBI" id="CHEBI:57792"/>
    </ligand>
</feature>
<feature type="binding site" evidence="1">
    <location>
        <begin position="207"/>
        <end position="208"/>
    </location>
    <ligand>
        <name>1-deoxy-D-xylulose 5-phosphate</name>
        <dbReference type="ChEBI" id="CHEBI:57792"/>
    </ligand>
</feature>
<sequence>MLTLYGETFPSRLLLGTAAYPTPEILKQSIQTAQPAMITVSLRRAGSGGEAHGQGFWSLLQETGVPVLPNTAGCQSVQEAVTTAQMAREVFETDWIKLELIGDDDTLQPDVFQLVEAAEILIKDGFKVLPYCTEDLIACRRLLDAGCQALMPWAAPIGTGLGAVHAYALNVLRERLPDTPLIIDAGLGLPSQAAQVMEWGFDGVLLNTAVSRSGDPVNMARAFALAVESGRLAFEAGPVEARDKAQASTPTVGQPFWHSAEY</sequence>
<evidence type="ECO:0000255" key="1">
    <source>
        <dbReference type="HAMAP-Rule" id="MF_00443"/>
    </source>
</evidence>
<evidence type="ECO:0000256" key="2">
    <source>
        <dbReference type="SAM" id="MobiDB-lite"/>
    </source>
</evidence>
<dbReference type="EC" id="2.8.1.10" evidence="1"/>
<dbReference type="EMBL" id="AM421808">
    <property type="protein sequence ID" value="CAM11207.1"/>
    <property type="molecule type" value="Genomic_DNA"/>
</dbReference>
<dbReference type="RefSeq" id="WP_002221723.1">
    <property type="nucleotide sequence ID" value="NC_008767.1"/>
</dbReference>
<dbReference type="SMR" id="A1KWF0"/>
<dbReference type="KEGG" id="nmc:NMC2052"/>
<dbReference type="HOGENOM" id="CLU_062233_1_0_4"/>
<dbReference type="UniPathway" id="UPA00060"/>
<dbReference type="Proteomes" id="UP000002286">
    <property type="component" value="Chromosome"/>
</dbReference>
<dbReference type="GO" id="GO:0005737">
    <property type="term" value="C:cytoplasm"/>
    <property type="evidence" value="ECO:0007669"/>
    <property type="project" value="UniProtKB-SubCell"/>
</dbReference>
<dbReference type="GO" id="GO:1990107">
    <property type="term" value="F:thiazole synthase activity"/>
    <property type="evidence" value="ECO:0007669"/>
    <property type="project" value="UniProtKB-EC"/>
</dbReference>
<dbReference type="GO" id="GO:0009229">
    <property type="term" value="P:thiamine diphosphate biosynthetic process"/>
    <property type="evidence" value="ECO:0007669"/>
    <property type="project" value="UniProtKB-UniRule"/>
</dbReference>
<dbReference type="CDD" id="cd04728">
    <property type="entry name" value="ThiG"/>
    <property type="match status" value="1"/>
</dbReference>
<dbReference type="Gene3D" id="3.20.20.70">
    <property type="entry name" value="Aldolase class I"/>
    <property type="match status" value="1"/>
</dbReference>
<dbReference type="HAMAP" id="MF_00443">
    <property type="entry name" value="ThiG"/>
    <property type="match status" value="1"/>
</dbReference>
<dbReference type="InterPro" id="IPR013785">
    <property type="entry name" value="Aldolase_TIM"/>
</dbReference>
<dbReference type="InterPro" id="IPR033983">
    <property type="entry name" value="Thiazole_synthase_ThiG"/>
</dbReference>
<dbReference type="InterPro" id="IPR008867">
    <property type="entry name" value="ThiG"/>
</dbReference>
<dbReference type="PANTHER" id="PTHR34266">
    <property type="entry name" value="THIAZOLE SYNTHASE"/>
    <property type="match status" value="1"/>
</dbReference>
<dbReference type="PANTHER" id="PTHR34266:SF2">
    <property type="entry name" value="THIAZOLE SYNTHASE"/>
    <property type="match status" value="1"/>
</dbReference>
<dbReference type="Pfam" id="PF05690">
    <property type="entry name" value="ThiG"/>
    <property type="match status" value="1"/>
</dbReference>
<dbReference type="SUPFAM" id="SSF110399">
    <property type="entry name" value="ThiG-like"/>
    <property type="match status" value="1"/>
</dbReference>
<accession>A1KWF0</accession>
<proteinExistence type="inferred from homology"/>
<name>THIG_NEIMF</name>
<protein>
    <recommendedName>
        <fullName evidence="1">Thiazole synthase</fullName>
        <ecNumber evidence="1">2.8.1.10</ecNumber>
    </recommendedName>
</protein>
<keyword id="KW-0963">Cytoplasm</keyword>
<keyword id="KW-0704">Schiff base</keyword>
<keyword id="KW-0784">Thiamine biosynthesis</keyword>
<keyword id="KW-0808">Transferase</keyword>
<comment type="function">
    <text evidence="1">Catalyzes the rearrangement of 1-deoxy-D-xylulose 5-phosphate (DXP) to produce the thiazole phosphate moiety of thiamine. Sulfur is provided by the thiocarboxylate moiety of the carrier protein ThiS. In vitro, sulfur can be provided by H(2)S.</text>
</comment>
<comment type="catalytic activity">
    <reaction evidence="1">
        <text>[ThiS sulfur-carrier protein]-C-terminal-Gly-aminoethanethioate + 2-iminoacetate + 1-deoxy-D-xylulose 5-phosphate = [ThiS sulfur-carrier protein]-C-terminal Gly-Gly + 2-[(2R,5Z)-2-carboxy-4-methylthiazol-5(2H)-ylidene]ethyl phosphate + 2 H2O + H(+)</text>
        <dbReference type="Rhea" id="RHEA:26297"/>
        <dbReference type="Rhea" id="RHEA-COMP:12909"/>
        <dbReference type="Rhea" id="RHEA-COMP:19908"/>
        <dbReference type="ChEBI" id="CHEBI:15377"/>
        <dbReference type="ChEBI" id="CHEBI:15378"/>
        <dbReference type="ChEBI" id="CHEBI:57792"/>
        <dbReference type="ChEBI" id="CHEBI:62899"/>
        <dbReference type="ChEBI" id="CHEBI:77846"/>
        <dbReference type="ChEBI" id="CHEBI:90778"/>
        <dbReference type="ChEBI" id="CHEBI:232372"/>
        <dbReference type="EC" id="2.8.1.10"/>
    </reaction>
</comment>
<comment type="pathway">
    <text evidence="1">Cofactor biosynthesis; thiamine diphosphate biosynthesis.</text>
</comment>
<comment type="subunit">
    <text evidence="1">Homotetramer. Forms heterodimers with either ThiH or ThiS.</text>
</comment>
<comment type="subcellular location">
    <subcellularLocation>
        <location evidence="1">Cytoplasm</location>
    </subcellularLocation>
</comment>
<comment type="similarity">
    <text evidence="1">Belongs to the ThiG family.</text>
</comment>
<reference key="1">
    <citation type="journal article" date="2007" name="PLoS Genet.">
        <title>Meningococcal genetic variation mechanisms viewed through comparative analysis of serogroup C strain FAM18.</title>
        <authorList>
            <person name="Bentley S.D."/>
            <person name="Vernikos G.S."/>
            <person name="Snyder L.A.S."/>
            <person name="Churcher C."/>
            <person name="Arrowsmith C."/>
            <person name="Chillingworth T."/>
            <person name="Cronin A."/>
            <person name="Davis P.H."/>
            <person name="Holroyd N.E."/>
            <person name="Jagels K."/>
            <person name="Maddison M."/>
            <person name="Moule S."/>
            <person name="Rabbinowitsch E."/>
            <person name="Sharp S."/>
            <person name="Unwin L."/>
            <person name="Whitehead S."/>
            <person name="Quail M.A."/>
            <person name="Achtman M."/>
            <person name="Barrell B.G."/>
            <person name="Saunders N.J."/>
            <person name="Parkhill J."/>
        </authorList>
    </citation>
    <scope>NUCLEOTIDE SEQUENCE [LARGE SCALE GENOMIC DNA]</scope>
    <source>
        <strain>ATCC 700532 / DSM 15464 / FAM18</strain>
    </source>
</reference>
<organism>
    <name type="scientific">Neisseria meningitidis serogroup C / serotype 2a (strain ATCC 700532 / DSM 15464 / FAM18)</name>
    <dbReference type="NCBI Taxonomy" id="272831"/>
    <lineage>
        <taxon>Bacteria</taxon>
        <taxon>Pseudomonadati</taxon>
        <taxon>Pseudomonadota</taxon>
        <taxon>Betaproteobacteria</taxon>
        <taxon>Neisseriales</taxon>
        <taxon>Neisseriaceae</taxon>
        <taxon>Neisseria</taxon>
    </lineage>
</organism>
<gene>
    <name evidence="1" type="primary">thiG</name>
    <name type="ordered locus">NMC2052</name>
</gene>